<sequence>MTSDPGSALQHRKRRHIDVCLTEAVDYQSLTTGFERYRLPYNALTQTDLHSVDLSTEFLGSHLRAPVLIGAMTGGAALSGIINRNLAAAAQQLGIGMMLGSQRVMIDDEAAAASFEVRGVAPDILLIGNIGLAQLRSSMVPGLAAALDRVGANGLAVHTNPLQEAMQHDGDTDFSGSIGRLCDVAGAIGYPVVLKEVGHGIGAAAAAELVGCPIAAIDVAGAGGTSWARIEQFVRYGDVRYPALAEWGVPTAQALTEVRQMLPDVPLVASGGIRTGMDAAKALAMGARVVAVARPLLAPAVESVEAVVDWLQRFIDELLVCLHGCGAANLSALRGRGVTELP</sequence>
<dbReference type="EC" id="5.3.3.2" evidence="1"/>
<dbReference type="EMBL" id="CP000511">
    <property type="protein sequence ID" value="ABM12991.1"/>
    <property type="molecule type" value="Genomic_DNA"/>
</dbReference>
<dbReference type="RefSeq" id="WP_011779405.1">
    <property type="nucleotide sequence ID" value="NC_008726.1"/>
</dbReference>
<dbReference type="SMR" id="A1T741"/>
<dbReference type="STRING" id="350058.Mvan_2176"/>
<dbReference type="KEGG" id="mva:Mvan_2176"/>
<dbReference type="eggNOG" id="COG1304">
    <property type="taxonomic scope" value="Bacteria"/>
</dbReference>
<dbReference type="HOGENOM" id="CLU_065515_1_0_11"/>
<dbReference type="Proteomes" id="UP000009159">
    <property type="component" value="Chromosome"/>
</dbReference>
<dbReference type="GO" id="GO:0005737">
    <property type="term" value="C:cytoplasm"/>
    <property type="evidence" value="ECO:0007669"/>
    <property type="project" value="UniProtKB-SubCell"/>
</dbReference>
<dbReference type="GO" id="GO:0010181">
    <property type="term" value="F:FMN binding"/>
    <property type="evidence" value="ECO:0007669"/>
    <property type="project" value="UniProtKB-UniRule"/>
</dbReference>
<dbReference type="GO" id="GO:0004452">
    <property type="term" value="F:isopentenyl-diphosphate delta-isomerase activity"/>
    <property type="evidence" value="ECO:0007669"/>
    <property type="project" value="UniProtKB-UniRule"/>
</dbReference>
<dbReference type="GO" id="GO:0000287">
    <property type="term" value="F:magnesium ion binding"/>
    <property type="evidence" value="ECO:0007669"/>
    <property type="project" value="UniProtKB-UniRule"/>
</dbReference>
<dbReference type="GO" id="GO:0070402">
    <property type="term" value="F:NADPH binding"/>
    <property type="evidence" value="ECO:0007669"/>
    <property type="project" value="UniProtKB-UniRule"/>
</dbReference>
<dbReference type="GO" id="GO:0016491">
    <property type="term" value="F:oxidoreductase activity"/>
    <property type="evidence" value="ECO:0007669"/>
    <property type="project" value="InterPro"/>
</dbReference>
<dbReference type="GO" id="GO:0008299">
    <property type="term" value="P:isoprenoid biosynthetic process"/>
    <property type="evidence" value="ECO:0007669"/>
    <property type="project" value="UniProtKB-UniRule"/>
</dbReference>
<dbReference type="CDD" id="cd02811">
    <property type="entry name" value="IDI-2_FMN"/>
    <property type="match status" value="1"/>
</dbReference>
<dbReference type="Gene3D" id="3.20.20.70">
    <property type="entry name" value="Aldolase class I"/>
    <property type="match status" value="1"/>
</dbReference>
<dbReference type="HAMAP" id="MF_00354">
    <property type="entry name" value="Idi_2"/>
    <property type="match status" value="1"/>
</dbReference>
<dbReference type="InterPro" id="IPR013785">
    <property type="entry name" value="Aldolase_TIM"/>
</dbReference>
<dbReference type="InterPro" id="IPR000262">
    <property type="entry name" value="FMN-dep_DH"/>
</dbReference>
<dbReference type="InterPro" id="IPR011179">
    <property type="entry name" value="IPdP_isomerase"/>
</dbReference>
<dbReference type="NCBIfam" id="TIGR02151">
    <property type="entry name" value="IPP_isom_2"/>
    <property type="match status" value="1"/>
</dbReference>
<dbReference type="PANTHER" id="PTHR43665">
    <property type="entry name" value="ISOPENTENYL-DIPHOSPHATE DELTA-ISOMERASE"/>
    <property type="match status" value="1"/>
</dbReference>
<dbReference type="PANTHER" id="PTHR43665:SF1">
    <property type="entry name" value="ISOPENTENYL-DIPHOSPHATE DELTA-ISOMERASE"/>
    <property type="match status" value="1"/>
</dbReference>
<dbReference type="Pfam" id="PF01070">
    <property type="entry name" value="FMN_dh"/>
    <property type="match status" value="2"/>
</dbReference>
<dbReference type="PIRSF" id="PIRSF003314">
    <property type="entry name" value="IPP_isomerase"/>
    <property type="match status" value="1"/>
</dbReference>
<dbReference type="SUPFAM" id="SSF51395">
    <property type="entry name" value="FMN-linked oxidoreductases"/>
    <property type="match status" value="1"/>
</dbReference>
<organism>
    <name type="scientific">Mycolicibacterium vanbaalenii (strain DSM 7251 / JCM 13017 / BCRC 16820 / KCTC 9966 / NRRL B-24157 / PYR-1)</name>
    <name type="common">Mycobacterium vanbaalenii</name>
    <dbReference type="NCBI Taxonomy" id="350058"/>
    <lineage>
        <taxon>Bacteria</taxon>
        <taxon>Bacillati</taxon>
        <taxon>Actinomycetota</taxon>
        <taxon>Actinomycetes</taxon>
        <taxon>Mycobacteriales</taxon>
        <taxon>Mycobacteriaceae</taxon>
        <taxon>Mycolicibacterium</taxon>
    </lineage>
</organism>
<reference key="1">
    <citation type="submission" date="2006-12" db="EMBL/GenBank/DDBJ databases">
        <title>Complete sequence of Mycobacterium vanbaalenii PYR-1.</title>
        <authorList>
            <consortium name="US DOE Joint Genome Institute"/>
            <person name="Copeland A."/>
            <person name="Lucas S."/>
            <person name="Lapidus A."/>
            <person name="Barry K."/>
            <person name="Detter J.C."/>
            <person name="Glavina del Rio T."/>
            <person name="Hammon N."/>
            <person name="Israni S."/>
            <person name="Dalin E."/>
            <person name="Tice H."/>
            <person name="Pitluck S."/>
            <person name="Singan V."/>
            <person name="Schmutz J."/>
            <person name="Larimer F."/>
            <person name="Land M."/>
            <person name="Hauser L."/>
            <person name="Kyrpides N."/>
            <person name="Anderson I.J."/>
            <person name="Miller C."/>
            <person name="Richardson P."/>
        </authorList>
    </citation>
    <scope>NUCLEOTIDE SEQUENCE [LARGE SCALE GENOMIC DNA]</scope>
    <source>
        <strain>DSM 7251 / JCM 13017 / BCRC 16820 / KCTC 9966 / NRRL B-24157 / PYR-1</strain>
    </source>
</reference>
<name>IDI2_MYCVP</name>
<protein>
    <recommendedName>
        <fullName evidence="1">Isopentenyl-diphosphate delta-isomerase</fullName>
        <shortName evidence="1">IPP isomerase</shortName>
        <ecNumber evidence="1">5.3.3.2</ecNumber>
    </recommendedName>
    <alternativeName>
        <fullName evidence="1">Isopentenyl diphosphate:dimethylallyl diphosphate isomerase</fullName>
    </alternativeName>
    <alternativeName>
        <fullName evidence="1">Isopentenyl pyrophosphate isomerase</fullName>
    </alternativeName>
    <alternativeName>
        <fullName evidence="1">Type 2 isopentenyl diphosphate isomerase</fullName>
        <shortName evidence="1">IDI-2</shortName>
    </alternativeName>
</protein>
<gene>
    <name evidence="1" type="primary">fni</name>
    <name type="ordered locus">Mvan_2176</name>
</gene>
<keyword id="KW-0963">Cytoplasm</keyword>
<keyword id="KW-0285">Flavoprotein</keyword>
<keyword id="KW-0288">FMN</keyword>
<keyword id="KW-0413">Isomerase</keyword>
<keyword id="KW-0414">Isoprene biosynthesis</keyword>
<keyword id="KW-0460">Magnesium</keyword>
<keyword id="KW-0479">Metal-binding</keyword>
<keyword id="KW-0521">NADP</keyword>
<comment type="function">
    <text evidence="1">Involved in the biosynthesis of isoprenoids. Catalyzes the 1,3-allylic rearrangement of the homoallylic substrate isopentenyl (IPP) to its allylic isomer, dimethylallyl diphosphate (DMAPP).</text>
</comment>
<comment type="catalytic activity">
    <reaction evidence="1">
        <text>isopentenyl diphosphate = dimethylallyl diphosphate</text>
        <dbReference type="Rhea" id="RHEA:23284"/>
        <dbReference type="ChEBI" id="CHEBI:57623"/>
        <dbReference type="ChEBI" id="CHEBI:128769"/>
        <dbReference type="EC" id="5.3.3.2"/>
    </reaction>
</comment>
<comment type="cofactor">
    <cofactor evidence="1">
        <name>FMN</name>
        <dbReference type="ChEBI" id="CHEBI:58210"/>
    </cofactor>
</comment>
<comment type="cofactor">
    <cofactor evidence="1">
        <name>NADPH</name>
        <dbReference type="ChEBI" id="CHEBI:57783"/>
    </cofactor>
</comment>
<comment type="cofactor">
    <cofactor evidence="1">
        <name>Mg(2+)</name>
        <dbReference type="ChEBI" id="CHEBI:18420"/>
    </cofactor>
</comment>
<comment type="subunit">
    <text evidence="1">Homooctamer. Dimer of tetramers.</text>
</comment>
<comment type="subcellular location">
    <subcellularLocation>
        <location evidence="1">Cytoplasm</location>
    </subcellularLocation>
</comment>
<comment type="similarity">
    <text evidence="1">Belongs to the IPP isomerase type 2 family.</text>
</comment>
<proteinExistence type="inferred from homology"/>
<feature type="chain" id="PRO_1000059837" description="Isopentenyl-diphosphate delta-isomerase">
    <location>
        <begin position="1"/>
        <end position="342"/>
    </location>
</feature>
<feature type="binding site" evidence="1">
    <location>
        <begin position="12"/>
        <end position="13"/>
    </location>
    <ligand>
        <name>substrate</name>
    </ligand>
</feature>
<feature type="binding site" evidence="1">
    <location>
        <begin position="71"/>
        <end position="73"/>
    </location>
    <ligand>
        <name>FMN</name>
        <dbReference type="ChEBI" id="CHEBI:58210"/>
    </ligand>
</feature>
<feature type="binding site" evidence="1">
    <location>
        <begin position="101"/>
        <end position="103"/>
    </location>
    <ligand>
        <name>substrate</name>
    </ligand>
</feature>
<feature type="binding site" evidence="1">
    <location>
        <position position="101"/>
    </location>
    <ligand>
        <name>FMN</name>
        <dbReference type="ChEBI" id="CHEBI:58210"/>
    </ligand>
</feature>
<feature type="binding site" evidence="1">
    <location>
        <position position="129"/>
    </location>
    <ligand>
        <name>FMN</name>
        <dbReference type="ChEBI" id="CHEBI:58210"/>
    </ligand>
</feature>
<feature type="binding site" evidence="1">
    <location>
        <position position="163"/>
    </location>
    <ligand>
        <name>substrate</name>
    </ligand>
</feature>
<feature type="binding site" evidence="1">
    <location>
        <position position="164"/>
    </location>
    <ligand>
        <name>Mg(2+)</name>
        <dbReference type="ChEBI" id="CHEBI:18420"/>
    </ligand>
</feature>
<feature type="binding site" evidence="1">
    <location>
        <position position="195"/>
    </location>
    <ligand>
        <name>FMN</name>
        <dbReference type="ChEBI" id="CHEBI:58210"/>
    </ligand>
</feature>
<feature type="binding site" evidence="1">
    <location>
        <position position="225"/>
    </location>
    <ligand>
        <name>FMN</name>
        <dbReference type="ChEBI" id="CHEBI:58210"/>
    </ligand>
</feature>
<feature type="binding site" evidence="1">
    <location>
        <begin position="272"/>
        <end position="274"/>
    </location>
    <ligand>
        <name>FMN</name>
        <dbReference type="ChEBI" id="CHEBI:58210"/>
    </ligand>
</feature>
<feature type="binding site" evidence="1">
    <location>
        <begin position="293"/>
        <end position="294"/>
    </location>
    <ligand>
        <name>FMN</name>
        <dbReference type="ChEBI" id="CHEBI:58210"/>
    </ligand>
</feature>
<evidence type="ECO:0000255" key="1">
    <source>
        <dbReference type="HAMAP-Rule" id="MF_00354"/>
    </source>
</evidence>
<accession>A1T741</accession>